<feature type="chain" id="PRO_0000436851" description="Acetyl-CoA decarbonylase/synthase complex subunit alpha 1">
    <location>
        <begin position="1"/>
        <end position="806"/>
    </location>
</feature>
<feature type="domain" description="4Fe-4S ferredoxin-type 1" evidence="1">
    <location>
        <begin position="407"/>
        <end position="436"/>
    </location>
</feature>
<feature type="domain" description="4Fe-4S ferredoxin-type 2" evidence="1">
    <location>
        <begin position="446"/>
        <end position="475"/>
    </location>
</feature>
<feature type="binding site" evidence="1 2">
    <location>
        <position position="73"/>
    </location>
    <ligand>
        <name>[4Fe-4S] cluster</name>
        <dbReference type="ChEBI" id="CHEBI:49883"/>
        <label>1</label>
        <note>ligand shared between dimeric partners</note>
    </ligand>
</feature>
<feature type="binding site" evidence="1 2 7">
    <location>
        <position position="76"/>
    </location>
    <ligand>
        <name>[4Fe-4S] cluster</name>
        <dbReference type="ChEBI" id="CHEBI:49883"/>
        <label>2</label>
    </ligand>
</feature>
<feature type="binding site" evidence="1 2">
    <location>
        <position position="77"/>
    </location>
    <ligand>
        <name>[4Fe-4S] cluster</name>
        <dbReference type="ChEBI" id="CHEBI:49883"/>
        <label>1</label>
        <note>ligand shared between dimeric partners</note>
    </ligand>
</feature>
<feature type="binding site" evidence="1 2 7">
    <location>
        <position position="79"/>
    </location>
    <ligand>
        <name>[4Fe-4S] cluster</name>
        <dbReference type="ChEBI" id="CHEBI:49883"/>
        <label>2</label>
    </ligand>
</feature>
<feature type="binding site" evidence="1 2 7">
    <location>
        <position position="84"/>
    </location>
    <ligand>
        <name>[4Fe-4S] cluster</name>
        <dbReference type="ChEBI" id="CHEBI:49883"/>
        <label>2</label>
    </ligand>
</feature>
<feature type="binding site" evidence="1 2 7">
    <location>
        <position position="94"/>
    </location>
    <ligand>
        <name>[4Fe-4S] cluster</name>
        <dbReference type="ChEBI" id="CHEBI:49883"/>
        <label>2</label>
    </ligand>
</feature>
<feature type="binding site" evidence="2">
    <location>
        <position position="117"/>
    </location>
    <ligand>
        <name>CO</name>
        <dbReference type="ChEBI" id="CHEBI:17245"/>
    </ligand>
</feature>
<feature type="binding site" evidence="2">
    <location>
        <position position="250"/>
    </location>
    <ligand>
        <name>[Ni-4Fe-4S] cluster</name>
        <dbReference type="ChEBI" id="CHEBI:47739"/>
    </ligand>
</feature>
<feature type="binding site" evidence="2">
    <location>
        <position position="278"/>
    </location>
    <ligand>
        <name>[Ni-4Fe-4S] cluster</name>
        <dbReference type="ChEBI" id="CHEBI:47739"/>
    </ligand>
</feature>
<feature type="binding site" evidence="1 2">
    <location>
        <position position="323"/>
    </location>
    <ligand>
        <name>[Ni-4Fe-4S] cluster</name>
        <dbReference type="ChEBI" id="CHEBI:47739"/>
    </ligand>
</feature>
<feature type="binding site" evidence="1 2 7">
    <location>
        <position position="417"/>
    </location>
    <ligand>
        <name>[4Fe-4S] cluster</name>
        <dbReference type="ChEBI" id="CHEBI:49883"/>
        <label>3</label>
    </ligand>
</feature>
<feature type="binding site" evidence="1 2 7">
    <location>
        <position position="420"/>
    </location>
    <ligand>
        <name>[4Fe-4S] cluster</name>
        <dbReference type="ChEBI" id="CHEBI:49883"/>
        <label>3</label>
    </ligand>
</feature>
<feature type="binding site" evidence="1 2 7">
    <location>
        <position position="423"/>
    </location>
    <ligand>
        <name>[4Fe-4S] cluster</name>
        <dbReference type="ChEBI" id="CHEBI:49883"/>
        <label>3</label>
    </ligand>
</feature>
<feature type="binding site" evidence="1 2 7">
    <location>
        <position position="427"/>
    </location>
    <ligand>
        <name>[4Fe-4S] cluster</name>
        <dbReference type="ChEBI" id="CHEBI:49883"/>
        <label>4</label>
    </ligand>
</feature>
<feature type="binding site" evidence="1 2 7">
    <location>
        <position position="455"/>
    </location>
    <ligand>
        <name>[4Fe-4S] cluster</name>
        <dbReference type="ChEBI" id="CHEBI:49883"/>
        <label>4</label>
    </ligand>
</feature>
<feature type="binding site" evidence="1 2 7">
    <location>
        <position position="458"/>
    </location>
    <ligand>
        <name>[4Fe-4S] cluster</name>
        <dbReference type="ChEBI" id="CHEBI:49883"/>
        <label>4</label>
    </ligand>
</feature>
<feature type="binding site" evidence="1 2 7">
    <location>
        <position position="461"/>
    </location>
    <ligand>
        <name>[4Fe-4S] cluster</name>
        <dbReference type="ChEBI" id="CHEBI:49883"/>
        <label>4</label>
    </ligand>
</feature>
<feature type="binding site" evidence="1 2 7">
    <location>
        <position position="465"/>
    </location>
    <ligand>
        <name>[4Fe-4S] cluster</name>
        <dbReference type="ChEBI" id="CHEBI:49883"/>
        <label>3</label>
    </ligand>
</feature>
<feature type="binding site" evidence="1 2">
    <location>
        <position position="523"/>
    </location>
    <ligand>
        <name>[Ni-4Fe-4S] cluster</name>
        <dbReference type="ChEBI" id="CHEBI:47739"/>
    </ligand>
</feature>
<feature type="binding site" evidence="1 2">
    <location>
        <position position="552"/>
    </location>
    <ligand>
        <name>[Ni-4Fe-4S] cluster</name>
        <dbReference type="ChEBI" id="CHEBI:47739"/>
    </ligand>
</feature>
<feature type="binding site" evidence="1 2">
    <location>
        <position position="587"/>
    </location>
    <ligand>
        <name>[Ni-4Fe-4S] cluster</name>
        <dbReference type="ChEBI" id="CHEBI:47739"/>
    </ligand>
</feature>
<feature type="turn" evidence="8">
    <location>
        <begin position="50"/>
        <end position="57"/>
    </location>
</feature>
<feature type="helix" evidence="8">
    <location>
        <begin position="58"/>
        <end position="64"/>
    </location>
</feature>
<feature type="strand" evidence="8">
    <location>
        <begin position="65"/>
        <end position="69"/>
    </location>
</feature>
<feature type="strand" evidence="8">
    <location>
        <begin position="72"/>
        <end position="76"/>
    </location>
</feature>
<feature type="turn" evidence="8">
    <location>
        <begin position="87"/>
        <end position="89"/>
    </location>
</feature>
<feature type="helix" evidence="8">
    <location>
        <begin position="98"/>
        <end position="132"/>
    </location>
</feature>
<feature type="helix" evidence="8">
    <location>
        <begin position="148"/>
        <end position="154"/>
    </location>
</feature>
<feature type="helix" evidence="8">
    <location>
        <begin position="162"/>
        <end position="164"/>
    </location>
</feature>
<feature type="helix" evidence="8">
    <location>
        <begin position="165"/>
        <end position="180"/>
    </location>
</feature>
<feature type="helix" evidence="8">
    <location>
        <begin position="190"/>
        <end position="218"/>
    </location>
</feature>
<feature type="strand" evidence="8">
    <location>
        <begin position="230"/>
        <end position="234"/>
    </location>
</feature>
<feature type="helix" evidence="8">
    <location>
        <begin position="235"/>
        <end position="237"/>
    </location>
</feature>
<feature type="strand" evidence="8">
    <location>
        <begin position="244"/>
        <end position="250"/>
    </location>
</feature>
<feature type="helix" evidence="8">
    <location>
        <begin position="253"/>
        <end position="264"/>
    </location>
</feature>
<feature type="turn" evidence="8">
    <location>
        <begin position="268"/>
        <end position="270"/>
    </location>
</feature>
<feature type="strand" evidence="8">
    <location>
        <begin position="271"/>
        <end position="277"/>
    </location>
</feature>
<feature type="helix" evidence="8">
    <location>
        <begin position="278"/>
        <end position="283"/>
    </location>
</feature>
<feature type="turn" evidence="8">
    <location>
        <begin position="284"/>
        <end position="287"/>
    </location>
</feature>
<feature type="strand" evidence="8">
    <location>
        <begin position="296"/>
        <end position="301"/>
    </location>
</feature>
<feature type="helix" evidence="8">
    <location>
        <begin position="302"/>
        <end position="304"/>
    </location>
</feature>
<feature type="helix" evidence="8">
    <location>
        <begin position="305"/>
        <end position="311"/>
    </location>
</feature>
<feature type="strand" evidence="8">
    <location>
        <begin position="315"/>
        <end position="319"/>
    </location>
</feature>
<feature type="strand" evidence="8">
    <location>
        <begin position="321"/>
        <end position="323"/>
    </location>
</feature>
<feature type="helix" evidence="8">
    <location>
        <begin position="328"/>
        <end position="334"/>
    </location>
</feature>
<feature type="strand" evidence="8">
    <location>
        <begin position="339"/>
        <end position="341"/>
    </location>
</feature>
<feature type="helix" evidence="8">
    <location>
        <begin position="358"/>
        <end position="366"/>
    </location>
</feature>
<feature type="strand" evidence="8">
    <location>
        <begin position="369"/>
        <end position="374"/>
    </location>
</feature>
<feature type="helix" evidence="8">
    <location>
        <begin position="378"/>
        <end position="398"/>
    </location>
</feature>
<feature type="helix" evidence="8">
    <location>
        <begin position="407"/>
        <end position="416"/>
    </location>
</feature>
<feature type="helix" evidence="8">
    <location>
        <begin position="422"/>
        <end position="426"/>
    </location>
</feature>
<feature type="helix" evidence="8">
    <location>
        <begin position="433"/>
        <end position="441"/>
    </location>
</feature>
<feature type="helix" evidence="8">
    <location>
        <begin position="446"/>
        <end position="454"/>
    </location>
</feature>
<feature type="helix" evidence="8">
    <location>
        <begin position="460"/>
        <end position="464"/>
    </location>
</feature>
<feature type="helix" evidence="8">
    <location>
        <begin position="471"/>
        <end position="478"/>
    </location>
</feature>
<feature type="helix" evidence="8">
    <location>
        <begin position="480"/>
        <end position="484"/>
    </location>
</feature>
<feature type="strand" evidence="8">
    <location>
        <begin position="488"/>
        <end position="491"/>
    </location>
</feature>
<feature type="helix" evidence="8">
    <location>
        <begin position="499"/>
        <end position="511"/>
    </location>
</feature>
<feature type="strand" evidence="8">
    <location>
        <begin position="512"/>
        <end position="514"/>
    </location>
</feature>
<feature type="strand" evidence="8">
    <location>
        <begin position="517"/>
        <end position="520"/>
    </location>
</feature>
<feature type="helix" evidence="8">
    <location>
        <begin position="532"/>
        <end position="542"/>
    </location>
</feature>
<feature type="strand" evidence="8">
    <location>
        <begin position="546"/>
        <end position="550"/>
    </location>
</feature>
<feature type="helix" evidence="8">
    <location>
        <begin position="551"/>
        <end position="557"/>
    </location>
</feature>
<feature type="helix" evidence="8">
    <location>
        <begin position="568"/>
        <end position="571"/>
    </location>
</feature>
<feature type="strand" evidence="8">
    <location>
        <begin position="575"/>
        <end position="577"/>
    </location>
</feature>
<feature type="strand" evidence="8">
    <location>
        <begin position="581"/>
        <end position="586"/>
    </location>
</feature>
<feature type="helix" evidence="8">
    <location>
        <begin position="587"/>
        <end position="590"/>
    </location>
</feature>
<feature type="helix" evidence="8">
    <location>
        <begin position="591"/>
        <end position="603"/>
    </location>
</feature>
<feature type="helix" evidence="8">
    <location>
        <begin position="613"/>
        <end position="623"/>
    </location>
</feature>
<feature type="strand" evidence="8">
    <location>
        <begin position="626"/>
        <end position="630"/>
    </location>
</feature>
<feature type="helix" evidence="8">
    <location>
        <begin position="636"/>
        <end position="647"/>
    </location>
</feature>
<feature type="strand" evidence="8">
    <location>
        <begin position="652"/>
        <end position="654"/>
    </location>
</feature>
<feature type="helix" evidence="8">
    <location>
        <begin position="656"/>
        <end position="661"/>
    </location>
</feature>
<feature type="strand" evidence="8">
    <location>
        <begin position="662"/>
        <end position="666"/>
    </location>
</feature>
<feature type="helix" evidence="8">
    <location>
        <begin position="672"/>
        <end position="674"/>
    </location>
</feature>
<feature type="strand" evidence="8">
    <location>
        <begin position="675"/>
        <end position="679"/>
    </location>
</feature>
<feature type="turn" evidence="8">
    <location>
        <begin position="680"/>
        <end position="682"/>
    </location>
</feature>
<feature type="strand" evidence="8">
    <location>
        <begin position="685"/>
        <end position="687"/>
    </location>
</feature>
<feature type="strand" evidence="8">
    <location>
        <begin position="692"/>
        <end position="698"/>
    </location>
</feature>
<feature type="helix" evidence="8">
    <location>
        <begin position="702"/>
        <end position="712"/>
    </location>
</feature>
<feature type="helix" evidence="8">
    <location>
        <begin position="720"/>
        <end position="737"/>
    </location>
</feature>
<feature type="helix" evidence="8">
    <location>
        <begin position="745"/>
        <end position="748"/>
    </location>
</feature>
<feature type="helix" evidence="8">
    <location>
        <begin position="752"/>
        <end position="754"/>
    </location>
</feature>
<feature type="helix" evidence="8">
    <location>
        <begin position="760"/>
        <end position="771"/>
    </location>
</feature>
<feature type="strand" evidence="8">
    <location>
        <begin position="774"/>
        <end position="776"/>
    </location>
</feature>
<feature type="turn" evidence="8">
    <location>
        <begin position="777"/>
        <end position="780"/>
    </location>
</feature>
<feature type="strand" evidence="8">
    <location>
        <begin position="781"/>
        <end position="784"/>
    </location>
</feature>
<feature type="strand" evidence="8">
    <location>
        <begin position="796"/>
        <end position="798"/>
    </location>
</feature>
<feature type="helix" evidence="8">
    <location>
        <begin position="800"/>
        <end position="802"/>
    </location>
</feature>
<comment type="function">
    <text evidence="1 3">Part of the ACDS complex that catalyzes the reversible cleavage of acetyl-CoA, allowing growth on acetate as sole source of carbon and energy. The alpha-epsilon subcomponent functions as a carbon monoxide dehydrogenase.</text>
</comment>
<comment type="catalytic activity">
    <reaction evidence="1">
        <text>CO + 2 oxidized [2Fe-2S]-[ferredoxin] + H2O = 2 reduced [2Fe-2S]-[ferredoxin] + CO2 + 2 H(+)</text>
        <dbReference type="Rhea" id="RHEA:21040"/>
        <dbReference type="Rhea" id="RHEA-COMP:10000"/>
        <dbReference type="Rhea" id="RHEA-COMP:10001"/>
        <dbReference type="ChEBI" id="CHEBI:15377"/>
        <dbReference type="ChEBI" id="CHEBI:15378"/>
        <dbReference type="ChEBI" id="CHEBI:16526"/>
        <dbReference type="ChEBI" id="CHEBI:17245"/>
        <dbReference type="ChEBI" id="CHEBI:33737"/>
        <dbReference type="ChEBI" id="CHEBI:33738"/>
        <dbReference type="EC" id="1.2.7.4"/>
    </reaction>
</comment>
<comment type="cofactor">
    <cofactor evidence="1 2">
        <name>[4Fe-4S] cluster</name>
        <dbReference type="ChEBI" id="CHEBI:49883"/>
    </cofactor>
    <text evidence="1 2">Binds 7 [4Fe-4S] clusters per heterotetramer.</text>
</comment>
<comment type="cofactor">
    <cofactor evidence="1 2">
        <name>[Ni-4Fe-4S] cluster</name>
        <dbReference type="ChEBI" id="CHEBI:47739"/>
    </cofactor>
    <text evidence="1 2">Binds 2 [Ni-4Fe-4S] clusters per heterotetramer.</text>
</comment>
<comment type="activity regulation">
    <text evidence="3">Carbon monoxide dehydrogenase activity is inhibited by KCN and is rapidly inactivated by O(2).</text>
</comment>
<comment type="biophysicochemical properties">
    <kinetics>
        <KM evidence="3">5 mM for CO (at 37 degrees Celsius)</KM>
        <Vmax evidence="3">1300.0 umol/min/mg enzyme for CO dehydrogenase activity using methyl viologen as electron acceptor (at 37 degrees Celsius)</Vmax>
    </kinetics>
</comment>
<comment type="pathway">
    <text evidence="1 5">One-carbon metabolism; methanogenesis from acetate.</text>
</comment>
<comment type="subunit">
    <text evidence="1 3 4">Heterotetramer of two alpha and two epsilon subunits (PubMed:6425262). The ACDS complex is made up of alpha, epsilon, beta, gamma and delta subunits with a probable stoichiometry of (alpha(2)epsilon(2))(4)-beta(8)-(gamma(1)delta(1))(8) (By similarity).</text>
</comment>
<comment type="induction">
    <text evidence="3">Up-regulated during growth on acetate.</text>
</comment>
<comment type="domain">
    <text evidence="1 4">Cluster B is an all-cysteinyl-liganded 4Fe-4S cluster; cluster C is a mixed Ni-Fe-S cluster which is the active site of CO oxidation. Cluster D is also an all-cysteinyl-liganded 4Fe-4S cluster that bridges the two subunits of the CODH dimer. Contains two additional 4Fe-4S clusters, dubbed E and F, that probably transport electrons from ferredoxin to the B cluster.</text>
</comment>
<comment type="similarity">
    <text evidence="1">Belongs to the Ni-containing carbon monoxide dehydrogenase family.</text>
</comment>
<name>ACDA1_METBF</name>
<sequence length="806" mass="88775">MSKLTTGSFSIEDLESVQITINNIVGAAKEAAEEKAKELVNAGPTLFAGLESYRDDWNFKLLDRYEPVITPMCDQCCYCTYGPCDLSGNKRGACGIDMLGHNGREFFLRVITGTACHAAHGRHLLDHLIETFGEDLPLNLGQSNVLTPNITISTGLSPKTLGEVKPAMEYVEEQLTQLLATVHAGQESAEIDYDSKALFSGSLDHVGMEISDIVQVTAYDFPRADPEAPLIEIGMGTIDKSKPFLCVIGHNVAGVTYMMDYMEDHDLTDKMEIAGLCCTAIDLTRYKEADRRPPYAKVIGSMSKELKVIRSGMPDVIVVDEQCVRGDIVPEAQKLMIPVIASNPKIMYGLPNRTDADVDETIEELRSGKIPGCVMLDYDKLGEICIRLTMEMAPIRDASGITAIPTDEEFTNWVMKCADCGACMIACPEELDIPEAMGFAKEGDYSYLDILHDQCIGCRRCEQVCKKEIPILNIIEKAAQKQISEEKGLMRAGRGQVSDAEIRAEGLNLVMGTTPGIIAIIGCPNYPEGTKDVYYIAEEFLKRNFIVVTTGCGAMDIGMFKDEDGKTLYERFPGGFECGGLANIGSCVSNAHITGAAEKVAAIFAQRTLEGNLAEIGDYVLNRVGACGLAWGAFSQKASSIGTGCNILGIPAVLGPHSSKYRRALIAKNYEEDKWKVYDARNGQEMAIPPAPEFLLTTAETWQEAIPMMAKACIRPSDNNMGRSIKLTHWMELHKKYLGSKPEDWWKFVRNEADLPLATREALLKELEKEHGWEIDWKRKKVISGPKIKFDVSAQPTNLKRLCKEA</sequence>
<keyword id="KW-0002">3D-structure</keyword>
<keyword id="KW-0004">4Fe-4S</keyword>
<keyword id="KW-0408">Iron</keyword>
<keyword id="KW-0411">Iron-sulfur</keyword>
<keyword id="KW-0479">Metal-binding</keyword>
<keyword id="KW-0484">Methanogenesis</keyword>
<keyword id="KW-0533">Nickel</keyword>
<keyword id="KW-0560">Oxidoreductase</keyword>
<keyword id="KW-0677">Repeat</keyword>
<gene>
    <name evidence="1" type="primary">cdhA1</name>
    <name evidence="6" type="ordered locus">Mbar_A0204</name>
</gene>
<reference key="1">
    <citation type="journal article" date="2006" name="J. Bacteriol.">
        <title>The Methanosarcina barkeri genome: comparative analysis with Methanosarcina acetivorans and Methanosarcina mazei reveals extensive rearrangement within methanosarcinal genomes.</title>
        <authorList>
            <person name="Maeder D.L."/>
            <person name="Anderson I."/>
            <person name="Brettin T.S."/>
            <person name="Bruce D.C."/>
            <person name="Gilna P."/>
            <person name="Han C.S."/>
            <person name="Lapidus A."/>
            <person name="Metcalf W.W."/>
            <person name="Saunders E."/>
            <person name="Tapia R."/>
            <person name="Sowers K.R."/>
        </authorList>
    </citation>
    <scope>NUCLEOTIDE SEQUENCE [LARGE SCALE GENOMIC DNA]</scope>
    <source>
        <strain>Fusaro / DSM 804</strain>
    </source>
</reference>
<reference key="2">
    <citation type="journal article" date="1984" name="J. Bacteriol.">
        <title>Characterization and purification of carbon monoxide dehydrogenase from Methanosarcina barkeri.</title>
        <authorList>
            <person name="Krzycki J.A."/>
            <person name="Zeikus J.G."/>
        </authorList>
    </citation>
    <scope>FUNCTION</scope>
    <scope>BIOPHYSICOCHEMICAL PROPERTIES</scope>
    <scope>ACTIVITY REGULATION</scope>
    <scope>SUBUNIT</scope>
    <scope>INDUCTION</scope>
    <scope>PATHWAY</scope>
    <source>
        <strain>MS</strain>
    </source>
</reference>
<reference key="3">
    <citation type="journal article" date="2008" name="Proc. Natl. Acad. Sci. U.S.A.">
        <title>Structure of the alpha2epsilon2 Ni-dependent CO dehydrogenase component of the Methanosarcina barkeri acetyl-CoA decarbonylase/synthase complex.</title>
        <authorList>
            <person name="Gong W."/>
            <person name="Hao B."/>
            <person name="Wei Z."/>
            <person name="Ferguson D.J."/>
            <person name="Tallant T."/>
            <person name="Krzycki J.A."/>
            <person name="Chan M.K."/>
        </authorList>
    </citation>
    <scope>X-RAY CRYSTALLOGRAPHY (2.00 ANGSTROMS) IN COMPLEX WITH ACDS EPSILON SUBUNIT; IRON-SULFUR (4FE-4S); NICKEL-IRON-SULFUR (NI-4FE-4S) AND CARBON MONOXIDE</scope>
    <scope>COFACTOR</scope>
    <scope>SUBUNIT</scope>
    <scope>REACTION MECHANISM</scope>
</reference>
<accession>Q46G04</accession>
<dbReference type="EC" id="1.2.7.4" evidence="1"/>
<dbReference type="EMBL" id="CP000099">
    <property type="protein sequence ID" value="AAZ69188.1"/>
    <property type="molecule type" value="Genomic_DNA"/>
</dbReference>
<dbReference type="PDB" id="3CF4">
    <property type="method" value="X-ray"/>
    <property type="resolution" value="2.00 A"/>
    <property type="chains" value="A=1-806"/>
</dbReference>
<dbReference type="PDBsum" id="3CF4"/>
<dbReference type="SMR" id="Q46G04"/>
<dbReference type="STRING" id="269797.Mbar_A0204"/>
<dbReference type="PaxDb" id="269797-Mbar_A0204"/>
<dbReference type="KEGG" id="mba:Mbar_A0204"/>
<dbReference type="eggNOG" id="arCOG02428">
    <property type="taxonomic scope" value="Archaea"/>
</dbReference>
<dbReference type="HOGENOM" id="CLU_361186_0_0_2"/>
<dbReference type="OrthoDB" id="35334at2157"/>
<dbReference type="UniPathway" id="UPA00642"/>
<dbReference type="EvolutionaryTrace" id="Q46G04"/>
<dbReference type="GO" id="GO:0051539">
    <property type="term" value="F:4 iron, 4 sulfur cluster binding"/>
    <property type="evidence" value="ECO:0007669"/>
    <property type="project" value="UniProtKB-KW"/>
</dbReference>
<dbReference type="GO" id="GO:0043885">
    <property type="term" value="F:anaerobic carbon-monoxide dehydrogenase activity"/>
    <property type="evidence" value="ECO:0007669"/>
    <property type="project" value="UniProtKB-UniRule"/>
</dbReference>
<dbReference type="GO" id="GO:0050418">
    <property type="term" value="F:hydroxylamine reductase activity"/>
    <property type="evidence" value="ECO:0007669"/>
    <property type="project" value="TreeGrafter"/>
</dbReference>
<dbReference type="GO" id="GO:0005506">
    <property type="term" value="F:iron ion binding"/>
    <property type="evidence" value="ECO:0007669"/>
    <property type="project" value="UniProtKB-UniRule"/>
</dbReference>
<dbReference type="GO" id="GO:0016151">
    <property type="term" value="F:nickel cation binding"/>
    <property type="evidence" value="ECO:0007669"/>
    <property type="project" value="UniProtKB-UniRule"/>
</dbReference>
<dbReference type="GO" id="GO:0004601">
    <property type="term" value="F:peroxidase activity"/>
    <property type="evidence" value="ECO:0007669"/>
    <property type="project" value="TreeGrafter"/>
</dbReference>
<dbReference type="GO" id="GO:0006084">
    <property type="term" value="P:acetyl-CoA metabolic process"/>
    <property type="evidence" value="ECO:0007669"/>
    <property type="project" value="InterPro"/>
</dbReference>
<dbReference type="GO" id="GO:0019385">
    <property type="term" value="P:methanogenesis, from acetate"/>
    <property type="evidence" value="ECO:0007669"/>
    <property type="project" value="UniProtKB-UniRule"/>
</dbReference>
<dbReference type="GO" id="GO:0042542">
    <property type="term" value="P:response to hydrogen peroxide"/>
    <property type="evidence" value="ECO:0007669"/>
    <property type="project" value="TreeGrafter"/>
</dbReference>
<dbReference type="CDD" id="cd01916">
    <property type="entry name" value="ACS_1"/>
    <property type="match status" value="1"/>
</dbReference>
<dbReference type="FunFam" id="1.10.8.190:FF:000001">
    <property type="entry name" value="Acetyl-CoA decarbonylase/synthase complex subunit alpha 1"/>
    <property type="match status" value="1"/>
</dbReference>
<dbReference type="FunFam" id="3.40.50.2030:FF:000004">
    <property type="entry name" value="Acetyl-CoA decarbonylase/synthase complex subunit alpha 1"/>
    <property type="match status" value="1"/>
</dbReference>
<dbReference type="FunFam" id="3.40.50.2030:FF:000006">
    <property type="entry name" value="Acetyl-CoA decarbonylase/synthase complex subunit alpha 1"/>
    <property type="match status" value="1"/>
</dbReference>
<dbReference type="Gene3D" id="3.30.70.20">
    <property type="match status" value="1"/>
</dbReference>
<dbReference type="Gene3D" id="3.40.50.2030">
    <property type="match status" value="2"/>
</dbReference>
<dbReference type="Gene3D" id="1.10.8.190">
    <property type="entry name" value="Carbon monoxide dehydrogenase alpha subunit. Chain M, domain 1"/>
    <property type="match status" value="1"/>
</dbReference>
<dbReference type="HAMAP" id="MF_01137">
    <property type="entry name" value="CdhA"/>
    <property type="match status" value="1"/>
</dbReference>
<dbReference type="InterPro" id="IPR017896">
    <property type="entry name" value="4Fe4S_Fe-S-bd"/>
</dbReference>
<dbReference type="InterPro" id="IPR017900">
    <property type="entry name" value="4Fe4S_Fe_S_CS"/>
</dbReference>
<dbReference type="InterPro" id="IPR004460">
    <property type="entry name" value="CdhA"/>
</dbReference>
<dbReference type="InterPro" id="IPR004137">
    <property type="entry name" value="HCP/CODH"/>
</dbReference>
<dbReference type="InterPro" id="IPR016099">
    <property type="entry name" value="Prismane-like_a/b-sand"/>
</dbReference>
<dbReference type="InterPro" id="IPR011254">
    <property type="entry name" value="Prismane-like_sf"/>
</dbReference>
<dbReference type="NCBIfam" id="TIGR00314">
    <property type="entry name" value="cdhA"/>
    <property type="match status" value="1"/>
</dbReference>
<dbReference type="PANTHER" id="PTHR30109:SF6">
    <property type="entry name" value="ACETYL-COA DECARBONYLASE_SYNTHASE COMPLEX SUBUNIT ALPHA"/>
    <property type="match status" value="1"/>
</dbReference>
<dbReference type="PANTHER" id="PTHR30109">
    <property type="entry name" value="HYDROXYLAMINE REDUCTASE"/>
    <property type="match status" value="1"/>
</dbReference>
<dbReference type="Pfam" id="PF12838">
    <property type="entry name" value="Fer4_7"/>
    <property type="match status" value="1"/>
</dbReference>
<dbReference type="Pfam" id="PF03063">
    <property type="entry name" value="Prismane"/>
    <property type="match status" value="2"/>
</dbReference>
<dbReference type="SUPFAM" id="SSF46548">
    <property type="entry name" value="alpha-helical ferredoxin"/>
    <property type="match status" value="1"/>
</dbReference>
<dbReference type="SUPFAM" id="SSF56821">
    <property type="entry name" value="Prismane protein-like"/>
    <property type="match status" value="1"/>
</dbReference>
<dbReference type="PROSITE" id="PS00198">
    <property type="entry name" value="4FE4S_FER_1"/>
    <property type="match status" value="1"/>
</dbReference>
<dbReference type="PROSITE" id="PS51379">
    <property type="entry name" value="4FE4S_FER_2"/>
    <property type="match status" value="2"/>
</dbReference>
<evidence type="ECO:0000255" key="1">
    <source>
        <dbReference type="HAMAP-Rule" id="MF_01137"/>
    </source>
</evidence>
<evidence type="ECO:0000269" key="2">
    <source>
    </source>
</evidence>
<evidence type="ECO:0000269" key="3">
    <source>
    </source>
</evidence>
<evidence type="ECO:0000305" key="4">
    <source>
    </source>
</evidence>
<evidence type="ECO:0000305" key="5">
    <source>
    </source>
</evidence>
<evidence type="ECO:0000312" key="6">
    <source>
        <dbReference type="EMBL" id="AAZ69188.1"/>
    </source>
</evidence>
<evidence type="ECO:0007744" key="7">
    <source>
        <dbReference type="PDB" id="3CF4"/>
    </source>
</evidence>
<evidence type="ECO:0007829" key="8">
    <source>
        <dbReference type="PDB" id="3CF4"/>
    </source>
</evidence>
<proteinExistence type="evidence at protein level"/>
<organism>
    <name type="scientific">Methanosarcina barkeri (strain Fusaro / DSM 804)</name>
    <dbReference type="NCBI Taxonomy" id="269797"/>
    <lineage>
        <taxon>Archaea</taxon>
        <taxon>Methanobacteriati</taxon>
        <taxon>Methanobacteriota</taxon>
        <taxon>Stenosarchaea group</taxon>
        <taxon>Methanomicrobia</taxon>
        <taxon>Methanosarcinales</taxon>
        <taxon>Methanosarcinaceae</taxon>
        <taxon>Methanosarcina</taxon>
    </lineage>
</organism>
<protein>
    <recommendedName>
        <fullName evidence="1">Acetyl-CoA decarbonylase/synthase complex subunit alpha 1</fullName>
        <shortName evidence="1">ACDS complex subunit alpha 1</shortName>
        <ecNumber evidence="1">1.2.7.4</ecNumber>
    </recommendedName>
    <alternativeName>
        <fullName evidence="1">ACDS complex carbon monoxide dehydrogenase subunit alpha 1</fullName>
        <shortName evidence="1">ACDS CODH subunit alpha 1</shortName>
    </alternativeName>
</protein>